<name>MURI_PARS2</name>
<dbReference type="EC" id="5.1.1.3" evidence="1"/>
<dbReference type="EMBL" id="CP000820">
    <property type="protein sequence ID" value="ABW14999.1"/>
    <property type="molecule type" value="Genomic_DNA"/>
</dbReference>
<dbReference type="RefSeq" id="WP_020463103.1">
    <property type="nucleotide sequence ID" value="NC_009921.1"/>
</dbReference>
<dbReference type="SMR" id="A8L764"/>
<dbReference type="STRING" id="298653.Franean1_5648"/>
<dbReference type="KEGG" id="fre:Franean1_5648"/>
<dbReference type="eggNOG" id="COG0796">
    <property type="taxonomic scope" value="Bacteria"/>
</dbReference>
<dbReference type="HOGENOM" id="CLU_052344_0_1_11"/>
<dbReference type="UniPathway" id="UPA00219"/>
<dbReference type="GO" id="GO:0008881">
    <property type="term" value="F:glutamate racemase activity"/>
    <property type="evidence" value="ECO:0007669"/>
    <property type="project" value="UniProtKB-UniRule"/>
</dbReference>
<dbReference type="GO" id="GO:0071555">
    <property type="term" value="P:cell wall organization"/>
    <property type="evidence" value="ECO:0007669"/>
    <property type="project" value="UniProtKB-KW"/>
</dbReference>
<dbReference type="GO" id="GO:0009252">
    <property type="term" value="P:peptidoglycan biosynthetic process"/>
    <property type="evidence" value="ECO:0007669"/>
    <property type="project" value="UniProtKB-UniRule"/>
</dbReference>
<dbReference type="GO" id="GO:0008360">
    <property type="term" value="P:regulation of cell shape"/>
    <property type="evidence" value="ECO:0007669"/>
    <property type="project" value="UniProtKB-KW"/>
</dbReference>
<dbReference type="FunFam" id="3.40.50.1860:FF:000002">
    <property type="entry name" value="Glutamate racemase"/>
    <property type="match status" value="1"/>
</dbReference>
<dbReference type="Gene3D" id="3.40.50.1860">
    <property type="match status" value="2"/>
</dbReference>
<dbReference type="HAMAP" id="MF_00258">
    <property type="entry name" value="Glu_racemase"/>
    <property type="match status" value="1"/>
</dbReference>
<dbReference type="InterPro" id="IPR015942">
    <property type="entry name" value="Asp/Glu/hydantoin_racemase"/>
</dbReference>
<dbReference type="InterPro" id="IPR001920">
    <property type="entry name" value="Asp/Glu_race"/>
</dbReference>
<dbReference type="InterPro" id="IPR018187">
    <property type="entry name" value="Asp/Glu_racemase_AS_1"/>
</dbReference>
<dbReference type="InterPro" id="IPR033134">
    <property type="entry name" value="Asp/Glu_racemase_AS_2"/>
</dbReference>
<dbReference type="InterPro" id="IPR004391">
    <property type="entry name" value="Glu_race"/>
</dbReference>
<dbReference type="NCBIfam" id="TIGR00067">
    <property type="entry name" value="glut_race"/>
    <property type="match status" value="1"/>
</dbReference>
<dbReference type="PANTHER" id="PTHR21198">
    <property type="entry name" value="GLUTAMATE RACEMASE"/>
    <property type="match status" value="1"/>
</dbReference>
<dbReference type="PANTHER" id="PTHR21198:SF2">
    <property type="entry name" value="GLUTAMATE RACEMASE"/>
    <property type="match status" value="1"/>
</dbReference>
<dbReference type="Pfam" id="PF01177">
    <property type="entry name" value="Asp_Glu_race"/>
    <property type="match status" value="1"/>
</dbReference>
<dbReference type="SUPFAM" id="SSF53681">
    <property type="entry name" value="Aspartate/glutamate racemase"/>
    <property type="match status" value="2"/>
</dbReference>
<dbReference type="PROSITE" id="PS00923">
    <property type="entry name" value="ASP_GLU_RACEMASE_1"/>
    <property type="match status" value="1"/>
</dbReference>
<dbReference type="PROSITE" id="PS00924">
    <property type="entry name" value="ASP_GLU_RACEMASE_2"/>
    <property type="match status" value="1"/>
</dbReference>
<keyword id="KW-0133">Cell shape</keyword>
<keyword id="KW-0961">Cell wall biogenesis/degradation</keyword>
<keyword id="KW-0413">Isomerase</keyword>
<keyword id="KW-0573">Peptidoglycan synthesis</keyword>
<feature type="chain" id="PRO_1000114045" description="Glutamate racemase">
    <location>
        <begin position="1"/>
        <end position="276"/>
    </location>
</feature>
<feature type="active site" description="Proton donor/acceptor" evidence="1">
    <location>
        <position position="73"/>
    </location>
</feature>
<feature type="active site" description="Proton donor/acceptor" evidence="1">
    <location>
        <position position="183"/>
    </location>
</feature>
<feature type="binding site" evidence="1">
    <location>
        <begin position="10"/>
        <end position="11"/>
    </location>
    <ligand>
        <name>substrate</name>
    </ligand>
</feature>
<feature type="binding site" evidence="1">
    <location>
        <begin position="42"/>
        <end position="43"/>
    </location>
    <ligand>
        <name>substrate</name>
    </ligand>
</feature>
<feature type="binding site" evidence="1">
    <location>
        <begin position="74"/>
        <end position="75"/>
    </location>
    <ligand>
        <name>substrate</name>
    </ligand>
</feature>
<feature type="binding site" evidence="1">
    <location>
        <begin position="184"/>
        <end position="185"/>
    </location>
    <ligand>
        <name>substrate</name>
    </ligand>
</feature>
<evidence type="ECO:0000255" key="1">
    <source>
        <dbReference type="HAMAP-Rule" id="MF_00258"/>
    </source>
</evidence>
<sequence>MSGAPIGVFDSGVGGLTVARAILDQLPGESLLYIGDTAHAPYGPRPIAEVRRYALAALDELVSAGVKLLVIACNSASAACLRDARERYDVPVVEVIVPATRRAVAATRSGRVGVIGTVATITSRAYEDAFAAAAGTELVSVACPAFVDFVERGITSGRQLLGLTEAYLAPLQEADVDTVILGCTHYPLLTGVIGLVMGEGVTLVSSAEETAKDTYRVLARDGLFRDPDLPPPAHRFLTTGDPAAFARVGRRFLGPEITAVSIAPAAAPRQAQAVGR</sequence>
<organism>
    <name type="scientific">Parafrankia sp. (strain EAN1pec)</name>
    <dbReference type="NCBI Taxonomy" id="298653"/>
    <lineage>
        <taxon>Bacteria</taxon>
        <taxon>Bacillati</taxon>
        <taxon>Actinomycetota</taxon>
        <taxon>Actinomycetes</taxon>
        <taxon>Frankiales</taxon>
        <taxon>Frankiaceae</taxon>
        <taxon>Parafrankia</taxon>
    </lineage>
</organism>
<comment type="function">
    <text evidence="1">Provides the (R)-glutamate required for cell wall biosynthesis.</text>
</comment>
<comment type="catalytic activity">
    <reaction evidence="1">
        <text>L-glutamate = D-glutamate</text>
        <dbReference type="Rhea" id="RHEA:12813"/>
        <dbReference type="ChEBI" id="CHEBI:29985"/>
        <dbReference type="ChEBI" id="CHEBI:29986"/>
        <dbReference type="EC" id="5.1.1.3"/>
    </reaction>
</comment>
<comment type="pathway">
    <text evidence="1">Cell wall biogenesis; peptidoglycan biosynthesis.</text>
</comment>
<comment type="similarity">
    <text evidence="1">Belongs to the aspartate/glutamate racemases family.</text>
</comment>
<accession>A8L764</accession>
<reference key="1">
    <citation type="journal article" date="2007" name="Genome Res.">
        <title>Genome characteristics of facultatively symbiotic Frankia sp. strains reflect host range and host plant biogeography.</title>
        <authorList>
            <person name="Normand P."/>
            <person name="Lapierre P."/>
            <person name="Tisa L.S."/>
            <person name="Gogarten J.P."/>
            <person name="Alloisio N."/>
            <person name="Bagnarol E."/>
            <person name="Bassi C.A."/>
            <person name="Berry A.M."/>
            <person name="Bickhart D.M."/>
            <person name="Choisne N."/>
            <person name="Couloux A."/>
            <person name="Cournoyer B."/>
            <person name="Cruveiller S."/>
            <person name="Daubin V."/>
            <person name="Demange N."/>
            <person name="Francino M.P."/>
            <person name="Goltsman E."/>
            <person name="Huang Y."/>
            <person name="Kopp O.R."/>
            <person name="Labarre L."/>
            <person name="Lapidus A."/>
            <person name="Lavire C."/>
            <person name="Marechal J."/>
            <person name="Martinez M."/>
            <person name="Mastronunzio J.E."/>
            <person name="Mullin B.C."/>
            <person name="Niemann J."/>
            <person name="Pujic P."/>
            <person name="Rawnsley T."/>
            <person name="Rouy Z."/>
            <person name="Schenowitz C."/>
            <person name="Sellstedt A."/>
            <person name="Tavares F."/>
            <person name="Tomkins J.P."/>
            <person name="Vallenet D."/>
            <person name="Valverde C."/>
            <person name="Wall L.G."/>
            <person name="Wang Y."/>
            <person name="Medigue C."/>
            <person name="Benson D.R."/>
        </authorList>
    </citation>
    <scope>NUCLEOTIDE SEQUENCE [LARGE SCALE GENOMIC DNA]</scope>
    <source>
        <strain>EAN1pec</strain>
    </source>
</reference>
<gene>
    <name evidence="1" type="primary">murI</name>
    <name type="ordered locus">Franean1_5648</name>
</gene>
<proteinExistence type="inferred from homology"/>
<protein>
    <recommendedName>
        <fullName evidence="1">Glutamate racemase</fullName>
        <ecNumber evidence="1">5.1.1.3</ecNumber>
    </recommendedName>
</protein>